<sequence>MGAAATGTPLRIGTRGSLLAMTQAGTVRDALIAAGRPAELVVVKTPGDMSSDPVQKIGVGVFTSALRDELAAGTIDLAVHSYKDLPTAPDPRFVIAAIPPREDPRDALVARDGLVLGELPAGAKVGTSAPRRVAQLRALGLGLDIVPLRGNLDSRLARVTDGELDAVVVARAGLSRIGRTAVITEALEPVQMLPAPAQGALAVECRSEDAALIEALAELDDAATRAAVVAERALLAELEAGCTAPVGALAEVVESLDDDGRIVEELSLRGCAAAVDGSEVLRASVVGDPERAAELGRALARELLELGARELLVEVAATEPGARSGTGAVRPPETDLSNPSPMENPQ</sequence>
<comment type="function">
    <text evidence="1">Tetrapolymerization of the monopyrrole PBG into the hydroxymethylbilane pre-uroporphyrinogen in several discrete steps.</text>
</comment>
<comment type="catalytic activity">
    <reaction evidence="1">
        <text>4 porphobilinogen + H2O = hydroxymethylbilane + 4 NH4(+)</text>
        <dbReference type="Rhea" id="RHEA:13185"/>
        <dbReference type="ChEBI" id="CHEBI:15377"/>
        <dbReference type="ChEBI" id="CHEBI:28938"/>
        <dbReference type="ChEBI" id="CHEBI:57845"/>
        <dbReference type="ChEBI" id="CHEBI:58126"/>
        <dbReference type="EC" id="2.5.1.61"/>
    </reaction>
</comment>
<comment type="cofactor">
    <cofactor evidence="1">
        <name>dipyrromethane</name>
        <dbReference type="ChEBI" id="CHEBI:60342"/>
    </cofactor>
    <text evidence="1">Binds 1 dipyrromethane group covalently.</text>
</comment>
<comment type="pathway">
    <text evidence="1">Porphyrin-containing compound metabolism; protoporphyrin-IX biosynthesis; coproporphyrinogen-III from 5-aminolevulinate: step 2/4.</text>
</comment>
<comment type="subunit">
    <text evidence="1">Monomer.</text>
</comment>
<comment type="miscellaneous">
    <text evidence="1">The porphobilinogen subunits are added to the dipyrromethane group.</text>
</comment>
<comment type="similarity">
    <text evidence="1">Belongs to the HMBS family.</text>
</comment>
<name>HEM3_NOCFA</name>
<keyword id="KW-0627">Porphyrin biosynthesis</keyword>
<keyword id="KW-1185">Reference proteome</keyword>
<keyword id="KW-0808">Transferase</keyword>
<protein>
    <recommendedName>
        <fullName evidence="1">Porphobilinogen deaminase</fullName>
        <shortName evidence="1">PBG</shortName>
        <ecNumber evidence="1">2.5.1.61</ecNumber>
    </recommendedName>
    <alternativeName>
        <fullName evidence="1">Hydroxymethylbilane synthase</fullName>
        <shortName evidence="1">HMBS</shortName>
    </alternativeName>
    <alternativeName>
        <fullName evidence="1">Pre-uroporphyrinogen synthase</fullName>
    </alternativeName>
</protein>
<evidence type="ECO:0000255" key="1">
    <source>
        <dbReference type="HAMAP-Rule" id="MF_00260"/>
    </source>
</evidence>
<evidence type="ECO:0000256" key="2">
    <source>
        <dbReference type="SAM" id="MobiDB-lite"/>
    </source>
</evidence>
<accession>Q5YP70</accession>
<dbReference type="EC" id="2.5.1.61" evidence="1"/>
<dbReference type="EMBL" id="AP006618">
    <property type="protein sequence ID" value="BAD60021.1"/>
    <property type="molecule type" value="Genomic_DNA"/>
</dbReference>
<dbReference type="SMR" id="Q5YP70"/>
<dbReference type="STRING" id="247156.NFA_51690"/>
<dbReference type="KEGG" id="nfa:NFA_51690"/>
<dbReference type="eggNOG" id="COG0181">
    <property type="taxonomic scope" value="Bacteria"/>
</dbReference>
<dbReference type="HOGENOM" id="CLU_019704_1_0_11"/>
<dbReference type="UniPathway" id="UPA00251">
    <property type="reaction ID" value="UER00319"/>
</dbReference>
<dbReference type="Proteomes" id="UP000006820">
    <property type="component" value="Chromosome"/>
</dbReference>
<dbReference type="GO" id="GO:0005737">
    <property type="term" value="C:cytoplasm"/>
    <property type="evidence" value="ECO:0007669"/>
    <property type="project" value="TreeGrafter"/>
</dbReference>
<dbReference type="GO" id="GO:0004418">
    <property type="term" value="F:hydroxymethylbilane synthase activity"/>
    <property type="evidence" value="ECO:0007669"/>
    <property type="project" value="UniProtKB-UniRule"/>
</dbReference>
<dbReference type="GO" id="GO:0006782">
    <property type="term" value="P:protoporphyrinogen IX biosynthetic process"/>
    <property type="evidence" value="ECO:0007669"/>
    <property type="project" value="UniProtKB-UniRule"/>
</dbReference>
<dbReference type="FunFam" id="3.30.160.40:FF:000001">
    <property type="entry name" value="Porphobilinogen deaminase"/>
    <property type="match status" value="1"/>
</dbReference>
<dbReference type="FunFam" id="3.40.190.10:FF:000005">
    <property type="entry name" value="Porphobilinogen deaminase"/>
    <property type="match status" value="1"/>
</dbReference>
<dbReference type="Gene3D" id="3.40.190.10">
    <property type="entry name" value="Periplasmic binding protein-like II"/>
    <property type="match status" value="2"/>
</dbReference>
<dbReference type="Gene3D" id="3.30.160.40">
    <property type="entry name" value="Porphobilinogen deaminase, C-terminal domain"/>
    <property type="match status" value="1"/>
</dbReference>
<dbReference type="HAMAP" id="MF_00260">
    <property type="entry name" value="Porphobil_deam"/>
    <property type="match status" value="1"/>
</dbReference>
<dbReference type="InterPro" id="IPR000860">
    <property type="entry name" value="HemC"/>
</dbReference>
<dbReference type="InterPro" id="IPR022419">
    <property type="entry name" value="Porphobilin_deaminase_cofac_BS"/>
</dbReference>
<dbReference type="InterPro" id="IPR022417">
    <property type="entry name" value="Porphobilin_deaminase_N"/>
</dbReference>
<dbReference type="InterPro" id="IPR022418">
    <property type="entry name" value="Porphobilinogen_deaminase_C"/>
</dbReference>
<dbReference type="InterPro" id="IPR036803">
    <property type="entry name" value="Porphobilinogen_deaminase_C_sf"/>
</dbReference>
<dbReference type="NCBIfam" id="TIGR00212">
    <property type="entry name" value="hemC"/>
    <property type="match status" value="1"/>
</dbReference>
<dbReference type="PANTHER" id="PTHR11557">
    <property type="entry name" value="PORPHOBILINOGEN DEAMINASE"/>
    <property type="match status" value="1"/>
</dbReference>
<dbReference type="PANTHER" id="PTHR11557:SF0">
    <property type="entry name" value="PORPHOBILINOGEN DEAMINASE"/>
    <property type="match status" value="1"/>
</dbReference>
<dbReference type="Pfam" id="PF01379">
    <property type="entry name" value="Porphobil_deam"/>
    <property type="match status" value="1"/>
</dbReference>
<dbReference type="Pfam" id="PF03900">
    <property type="entry name" value="Porphobil_deamC"/>
    <property type="match status" value="1"/>
</dbReference>
<dbReference type="PIRSF" id="PIRSF001438">
    <property type="entry name" value="4pyrrol_synth_OHMeBilane_synth"/>
    <property type="match status" value="1"/>
</dbReference>
<dbReference type="PRINTS" id="PR00151">
    <property type="entry name" value="PORPHBDMNASE"/>
</dbReference>
<dbReference type="SUPFAM" id="SSF53850">
    <property type="entry name" value="Periplasmic binding protein-like II"/>
    <property type="match status" value="1"/>
</dbReference>
<dbReference type="SUPFAM" id="SSF54782">
    <property type="entry name" value="Porphobilinogen deaminase (hydroxymethylbilane synthase), C-terminal domain"/>
    <property type="match status" value="1"/>
</dbReference>
<dbReference type="PROSITE" id="PS00533">
    <property type="entry name" value="PORPHOBILINOGEN_DEAM"/>
    <property type="match status" value="1"/>
</dbReference>
<feature type="chain" id="PRO_0000142964" description="Porphobilinogen deaminase">
    <location>
        <begin position="1"/>
        <end position="346"/>
    </location>
</feature>
<feature type="region of interest" description="Disordered" evidence="2">
    <location>
        <begin position="317"/>
        <end position="346"/>
    </location>
</feature>
<feature type="compositionally biased region" description="Polar residues" evidence="2">
    <location>
        <begin position="335"/>
        <end position="346"/>
    </location>
</feature>
<feature type="modified residue" description="S-(dipyrrolylmethanemethyl)cysteine" evidence="1">
    <location>
        <position position="242"/>
    </location>
</feature>
<proteinExistence type="inferred from homology"/>
<reference key="1">
    <citation type="journal article" date="2004" name="Proc. Natl. Acad. Sci. U.S.A.">
        <title>The complete genomic sequence of Nocardia farcinica IFM 10152.</title>
        <authorList>
            <person name="Ishikawa J."/>
            <person name="Yamashita A."/>
            <person name="Mikami Y."/>
            <person name="Hoshino Y."/>
            <person name="Kurita H."/>
            <person name="Hotta K."/>
            <person name="Shiba T."/>
            <person name="Hattori M."/>
        </authorList>
    </citation>
    <scope>NUCLEOTIDE SEQUENCE [LARGE SCALE GENOMIC DNA]</scope>
    <source>
        <strain>IFM 10152</strain>
    </source>
</reference>
<gene>
    <name evidence="1" type="primary">hemC</name>
    <name type="ordered locus">NFA_51690</name>
</gene>
<organism>
    <name type="scientific">Nocardia farcinica (strain IFM 10152)</name>
    <dbReference type="NCBI Taxonomy" id="247156"/>
    <lineage>
        <taxon>Bacteria</taxon>
        <taxon>Bacillati</taxon>
        <taxon>Actinomycetota</taxon>
        <taxon>Actinomycetes</taxon>
        <taxon>Mycobacteriales</taxon>
        <taxon>Nocardiaceae</taxon>
        <taxon>Nocardia</taxon>
    </lineage>
</organism>